<comment type="function">
    <text evidence="4">Accepts the ubiquitin from the E1 complex and catalyzes its covalent attachment to other proteins.</text>
</comment>
<comment type="catalytic activity">
    <reaction evidence="2 3">
        <text>S-ubiquitinyl-[E1 ubiquitin-activating enzyme]-L-cysteine + [E2 ubiquitin-conjugating enzyme]-L-cysteine = [E1 ubiquitin-activating enzyme]-L-cysteine + S-ubiquitinyl-[E2 ubiquitin-conjugating enzyme]-L-cysteine.</text>
        <dbReference type="EC" id="2.3.2.23"/>
    </reaction>
</comment>
<comment type="pathway">
    <text evidence="2">Protein modification; protein ubiquitination.</text>
</comment>
<comment type="alternative products">
    <event type="alternative splicing"/>
    <isoform>
        <id>Q9FI61-1</id>
        <name>1</name>
        <sequence type="displayed"/>
    </isoform>
    <text>A number of isoforms are produced. According to EST sequences.</text>
</comment>
<comment type="tissue specificity">
    <text evidence="4">Expressed in seeds, pistils, siliques, hypocotyls and leaves.</text>
</comment>
<comment type="induction">
    <text evidence="4">Up-regulated by syringolin, a cell death-inducing chemical.</text>
</comment>
<comment type="similarity">
    <text evidence="2">Belongs to the ubiquitin-conjugating enzyme family.</text>
</comment>
<gene>
    <name type="primary">UBC27</name>
    <name type="synonym">UBC1</name>
    <name type="ordered locus">At5g50870</name>
    <name type="ORF">K3K7.1</name>
</gene>
<accession>Q9FI61</accession>
<accession>Q42045</accession>
<feature type="chain" id="PRO_0000345192" description="Ubiquitin-conjugating enzyme E2 27">
    <location>
        <begin position="1"/>
        <end position="192"/>
    </location>
</feature>
<feature type="domain" description="UBC core" evidence="2">
    <location>
        <begin position="2"/>
        <end position="150"/>
    </location>
</feature>
<feature type="domain" description="UBA" evidence="1">
    <location>
        <begin position="153"/>
        <end position="192"/>
    </location>
</feature>
<feature type="active site" description="Glycyl thioester intermediate" evidence="2 3">
    <location>
        <position position="88"/>
    </location>
</feature>
<protein>
    <recommendedName>
        <fullName>Ubiquitin-conjugating enzyme E2 27</fullName>
        <ecNumber>2.3.2.23</ecNumber>
    </recommendedName>
    <alternativeName>
        <fullName>E2 ubiquitin-conjugating enzyme 27</fullName>
    </alternativeName>
    <alternativeName>
        <fullName>Ubiquitin carrier protein 27</fullName>
    </alternativeName>
</protein>
<sequence length="192" mass="21254">MIDFSRIQKELQDCERNQDSSGIRVCPKSDNLTRLTGTIPGPIGTPYEGGTFQIDITMPDGYPFEPPKMQFSTKVWHPNISSQSGAICLDILKDQWSPALTLKTALVSIQALLSAPEPKDPQDAVVAEQYMKNYQVFVSTARYWTETFAKKSSLEEKVKRLVEMGFGDAQVRSAIESSGGDENLALEKLCSA</sequence>
<name>UBC27_ARATH</name>
<dbReference type="EC" id="2.3.2.23"/>
<dbReference type="EMBL" id="DQ027040">
    <property type="protein sequence ID" value="AAY44866.1"/>
    <property type="molecule type" value="mRNA"/>
</dbReference>
<dbReference type="EMBL" id="DQ677667">
    <property type="protein sequence ID" value="ABG85247.1"/>
    <property type="molecule type" value="mRNA"/>
</dbReference>
<dbReference type="EMBL" id="AB017063">
    <property type="protein sequence ID" value="BAB08733.1"/>
    <property type="molecule type" value="Genomic_DNA"/>
</dbReference>
<dbReference type="EMBL" id="CP002688">
    <property type="protein sequence ID" value="AED96003.1"/>
    <property type="molecule type" value="Genomic_DNA"/>
</dbReference>
<dbReference type="EMBL" id="AY065303">
    <property type="protein sequence ID" value="AAL38779.1"/>
    <property type="molecule type" value="mRNA"/>
</dbReference>
<dbReference type="EMBL" id="AY096429">
    <property type="protein sequence ID" value="AAM20069.1"/>
    <property type="molecule type" value="mRNA"/>
</dbReference>
<dbReference type="EMBL" id="Z25704">
    <property type="protein sequence ID" value="CAA81015.1"/>
    <property type="molecule type" value="mRNA"/>
</dbReference>
<dbReference type="RefSeq" id="NP_199900.1">
    <molecule id="Q9FI61-1"/>
    <property type="nucleotide sequence ID" value="NM_124465.6"/>
</dbReference>
<dbReference type="SMR" id="Q9FI61"/>
<dbReference type="BioGRID" id="20405">
    <property type="interactions" value="2"/>
</dbReference>
<dbReference type="FunCoup" id="Q9FI61">
    <property type="interactions" value="5054"/>
</dbReference>
<dbReference type="IntAct" id="Q9FI61">
    <property type="interactions" value="1"/>
</dbReference>
<dbReference type="STRING" id="3702.Q9FI61"/>
<dbReference type="PaxDb" id="3702-AT5G50870.2"/>
<dbReference type="ProteomicsDB" id="242817">
    <molecule id="Q9FI61-1"/>
</dbReference>
<dbReference type="EnsemblPlants" id="AT5G50870.1">
    <molecule id="Q9FI61-1"/>
    <property type="protein sequence ID" value="AT5G50870.1"/>
    <property type="gene ID" value="AT5G50870"/>
</dbReference>
<dbReference type="GeneID" id="835159"/>
<dbReference type="Gramene" id="AT5G50870.1">
    <molecule id="Q9FI61-1"/>
    <property type="protein sequence ID" value="AT5G50870.1"/>
    <property type="gene ID" value="AT5G50870"/>
</dbReference>
<dbReference type="KEGG" id="ath:AT5G50870"/>
<dbReference type="Araport" id="AT5G50870"/>
<dbReference type="TAIR" id="AT5G50870">
    <property type="gene designation" value="UBC27"/>
</dbReference>
<dbReference type="eggNOG" id="KOG0418">
    <property type="taxonomic scope" value="Eukaryota"/>
</dbReference>
<dbReference type="InParanoid" id="Q9FI61"/>
<dbReference type="OMA" id="HWTFVYA"/>
<dbReference type="OrthoDB" id="7851174at2759"/>
<dbReference type="PhylomeDB" id="Q9FI61"/>
<dbReference type="UniPathway" id="UPA00143"/>
<dbReference type="CD-CODE" id="4299E36E">
    <property type="entry name" value="Nucleolus"/>
</dbReference>
<dbReference type="PRO" id="PR:Q9FI61"/>
<dbReference type="Proteomes" id="UP000006548">
    <property type="component" value="Chromosome 5"/>
</dbReference>
<dbReference type="ExpressionAtlas" id="Q9FI61">
    <property type="expression patterns" value="baseline and differential"/>
</dbReference>
<dbReference type="GO" id="GO:0005524">
    <property type="term" value="F:ATP binding"/>
    <property type="evidence" value="ECO:0007669"/>
    <property type="project" value="UniProtKB-KW"/>
</dbReference>
<dbReference type="GO" id="GO:0061631">
    <property type="term" value="F:ubiquitin conjugating enzyme activity"/>
    <property type="evidence" value="ECO:0007669"/>
    <property type="project" value="UniProtKB-EC"/>
</dbReference>
<dbReference type="GO" id="GO:0016567">
    <property type="term" value="P:protein ubiquitination"/>
    <property type="evidence" value="ECO:0007669"/>
    <property type="project" value="UniProtKB-UniPathway"/>
</dbReference>
<dbReference type="CDD" id="cd14312">
    <property type="entry name" value="UBA_II_E2_UBC27_like"/>
    <property type="match status" value="1"/>
</dbReference>
<dbReference type="CDD" id="cd23800">
    <property type="entry name" value="UBCc_UBE2K"/>
    <property type="match status" value="1"/>
</dbReference>
<dbReference type="FunFam" id="3.10.110.10:FF:000037">
    <property type="entry name" value="ubiquitin-conjugating enzyme E2 27"/>
    <property type="match status" value="1"/>
</dbReference>
<dbReference type="Gene3D" id="1.10.8.10">
    <property type="entry name" value="DNA helicase RuvA subunit, C-terminal domain"/>
    <property type="match status" value="1"/>
</dbReference>
<dbReference type="Gene3D" id="3.10.110.10">
    <property type="entry name" value="Ubiquitin Conjugating Enzyme"/>
    <property type="match status" value="1"/>
</dbReference>
<dbReference type="InterPro" id="IPR015940">
    <property type="entry name" value="UBA"/>
</dbReference>
<dbReference type="InterPro" id="IPR009060">
    <property type="entry name" value="UBA-like_sf"/>
</dbReference>
<dbReference type="InterPro" id="IPR041974">
    <property type="entry name" value="UBC27_UBA"/>
</dbReference>
<dbReference type="InterPro" id="IPR000608">
    <property type="entry name" value="UBQ-conjugat_E2_core"/>
</dbReference>
<dbReference type="InterPro" id="IPR023313">
    <property type="entry name" value="UBQ-conjugating_AS"/>
</dbReference>
<dbReference type="InterPro" id="IPR016135">
    <property type="entry name" value="UBQ-conjugating_enzyme/RWD"/>
</dbReference>
<dbReference type="PANTHER" id="PTHR24068">
    <property type="entry name" value="UBIQUITIN-CONJUGATING ENZYME E2"/>
    <property type="match status" value="1"/>
</dbReference>
<dbReference type="Pfam" id="PF00627">
    <property type="entry name" value="UBA"/>
    <property type="match status" value="1"/>
</dbReference>
<dbReference type="Pfam" id="PF00179">
    <property type="entry name" value="UQ_con"/>
    <property type="match status" value="1"/>
</dbReference>
<dbReference type="SMART" id="SM00165">
    <property type="entry name" value="UBA"/>
    <property type="match status" value="1"/>
</dbReference>
<dbReference type="SMART" id="SM00212">
    <property type="entry name" value="UBCc"/>
    <property type="match status" value="1"/>
</dbReference>
<dbReference type="SUPFAM" id="SSF46934">
    <property type="entry name" value="UBA-like"/>
    <property type="match status" value="1"/>
</dbReference>
<dbReference type="SUPFAM" id="SSF54495">
    <property type="entry name" value="UBC-like"/>
    <property type="match status" value="1"/>
</dbReference>
<dbReference type="PROSITE" id="PS50030">
    <property type="entry name" value="UBA"/>
    <property type="match status" value="1"/>
</dbReference>
<dbReference type="PROSITE" id="PS00183">
    <property type="entry name" value="UBC_1"/>
    <property type="match status" value="1"/>
</dbReference>
<dbReference type="PROSITE" id="PS50127">
    <property type="entry name" value="UBC_2"/>
    <property type="match status" value="1"/>
</dbReference>
<organism>
    <name type="scientific">Arabidopsis thaliana</name>
    <name type="common">Mouse-ear cress</name>
    <dbReference type="NCBI Taxonomy" id="3702"/>
    <lineage>
        <taxon>Eukaryota</taxon>
        <taxon>Viridiplantae</taxon>
        <taxon>Streptophyta</taxon>
        <taxon>Embryophyta</taxon>
        <taxon>Tracheophyta</taxon>
        <taxon>Spermatophyta</taxon>
        <taxon>Magnoliopsida</taxon>
        <taxon>eudicotyledons</taxon>
        <taxon>Gunneridae</taxon>
        <taxon>Pentapetalae</taxon>
        <taxon>rosids</taxon>
        <taxon>malvids</taxon>
        <taxon>Brassicales</taxon>
        <taxon>Brassicaceae</taxon>
        <taxon>Camelineae</taxon>
        <taxon>Arabidopsis</taxon>
    </lineage>
</organism>
<proteinExistence type="evidence at transcript level"/>
<evidence type="ECO:0000255" key="1">
    <source>
        <dbReference type="PROSITE-ProRule" id="PRU00212"/>
    </source>
</evidence>
<evidence type="ECO:0000255" key="2">
    <source>
        <dbReference type="PROSITE-ProRule" id="PRU00388"/>
    </source>
</evidence>
<evidence type="ECO:0000255" key="3">
    <source>
        <dbReference type="PROSITE-ProRule" id="PRU10133"/>
    </source>
</evidence>
<evidence type="ECO:0000269" key="4">
    <source>
    </source>
</evidence>
<keyword id="KW-0025">Alternative splicing</keyword>
<keyword id="KW-0067">ATP-binding</keyword>
<keyword id="KW-0547">Nucleotide-binding</keyword>
<keyword id="KW-1185">Reference proteome</keyword>
<keyword id="KW-0808">Transferase</keyword>
<keyword id="KW-0833">Ubl conjugation pathway</keyword>
<reference key="1">
    <citation type="journal article" date="2005" name="Plant Physiol.">
        <title>Genome analysis and functional characterization of the E2 and RING-type E3 ligase ubiquitination enzymes of Arabidopsis.</title>
        <authorList>
            <person name="Kraft E."/>
            <person name="Stone S.L."/>
            <person name="Ma L."/>
            <person name="Su N."/>
            <person name="Gao Y."/>
            <person name="Lau O.-S."/>
            <person name="Deng X.-W."/>
            <person name="Callis J."/>
        </authorList>
    </citation>
    <scope>NUCLEOTIDE SEQUENCE [MRNA]</scope>
    <scope>FUNCTION</scope>
    <scope>TISSUE SPECIFICITY</scope>
    <scope>INDUCTION</scope>
    <scope>GENE FAMILY</scope>
    <scope>NOMENCLATURE</scope>
</reference>
<reference key="2">
    <citation type="submission" date="2006-06" db="EMBL/GenBank/DDBJ databases">
        <title>Functional differentiation of ubiquitin-interacting factors from Arabidopsis.</title>
        <authorList>
            <person name="Fu H."/>
        </authorList>
    </citation>
    <scope>NUCLEOTIDE SEQUENCE [MRNA]</scope>
</reference>
<reference key="3">
    <citation type="journal article" date="1999" name="DNA Res.">
        <title>Structural analysis of Arabidopsis thaliana chromosome 5. IX. Sequence features of the regions of 1,011,550 bp covered by seventeen P1 and TAC clones.</title>
        <authorList>
            <person name="Kaneko T."/>
            <person name="Katoh T."/>
            <person name="Sato S."/>
            <person name="Nakamura Y."/>
            <person name="Asamizu E."/>
            <person name="Kotani H."/>
            <person name="Miyajima N."/>
            <person name="Tabata S."/>
        </authorList>
    </citation>
    <scope>NUCLEOTIDE SEQUENCE [LARGE SCALE GENOMIC DNA]</scope>
    <source>
        <strain>cv. Columbia</strain>
    </source>
</reference>
<reference key="4">
    <citation type="journal article" date="2017" name="Plant J.">
        <title>Araport11: a complete reannotation of the Arabidopsis thaliana reference genome.</title>
        <authorList>
            <person name="Cheng C.Y."/>
            <person name="Krishnakumar V."/>
            <person name="Chan A.P."/>
            <person name="Thibaud-Nissen F."/>
            <person name="Schobel S."/>
            <person name="Town C.D."/>
        </authorList>
    </citation>
    <scope>GENOME REANNOTATION</scope>
    <source>
        <strain>cv. Columbia</strain>
    </source>
</reference>
<reference key="5">
    <citation type="journal article" date="2003" name="Science">
        <title>Empirical analysis of transcriptional activity in the Arabidopsis genome.</title>
        <authorList>
            <person name="Yamada K."/>
            <person name="Lim J."/>
            <person name="Dale J.M."/>
            <person name="Chen H."/>
            <person name="Shinn P."/>
            <person name="Palm C.J."/>
            <person name="Southwick A.M."/>
            <person name="Wu H.C."/>
            <person name="Kim C.J."/>
            <person name="Nguyen M."/>
            <person name="Pham P.K."/>
            <person name="Cheuk R.F."/>
            <person name="Karlin-Newmann G."/>
            <person name="Liu S.X."/>
            <person name="Lam B."/>
            <person name="Sakano H."/>
            <person name="Wu T."/>
            <person name="Yu G."/>
            <person name="Miranda M."/>
            <person name="Quach H.L."/>
            <person name="Tripp M."/>
            <person name="Chang C.H."/>
            <person name="Lee J.M."/>
            <person name="Toriumi M.J."/>
            <person name="Chan M.M."/>
            <person name="Tang C.C."/>
            <person name="Onodera C.S."/>
            <person name="Deng J.M."/>
            <person name="Akiyama K."/>
            <person name="Ansari Y."/>
            <person name="Arakawa T."/>
            <person name="Banh J."/>
            <person name="Banno F."/>
            <person name="Bowser L."/>
            <person name="Brooks S.Y."/>
            <person name="Carninci P."/>
            <person name="Chao Q."/>
            <person name="Choy N."/>
            <person name="Enju A."/>
            <person name="Goldsmith A.D."/>
            <person name="Gurjal M."/>
            <person name="Hansen N.F."/>
            <person name="Hayashizaki Y."/>
            <person name="Johnson-Hopson C."/>
            <person name="Hsuan V.W."/>
            <person name="Iida K."/>
            <person name="Karnes M."/>
            <person name="Khan S."/>
            <person name="Koesema E."/>
            <person name="Ishida J."/>
            <person name="Jiang P.X."/>
            <person name="Jones T."/>
            <person name="Kawai J."/>
            <person name="Kamiya A."/>
            <person name="Meyers C."/>
            <person name="Nakajima M."/>
            <person name="Narusaka M."/>
            <person name="Seki M."/>
            <person name="Sakurai T."/>
            <person name="Satou M."/>
            <person name="Tamse R."/>
            <person name="Vaysberg M."/>
            <person name="Wallender E.K."/>
            <person name="Wong C."/>
            <person name="Yamamura Y."/>
            <person name="Yuan S."/>
            <person name="Shinozaki K."/>
            <person name="Davis R.W."/>
            <person name="Theologis A."/>
            <person name="Ecker J.R."/>
        </authorList>
    </citation>
    <scope>NUCLEOTIDE SEQUENCE [LARGE SCALE MRNA]</scope>
    <source>
        <strain>cv. Columbia</strain>
    </source>
</reference>
<reference key="6">
    <citation type="submission" date="1993-08" db="EMBL/GenBank/DDBJ databases">
        <title>The Arabidopsis thaliana transcribed genome: the GDR cDNA program.</title>
        <authorList>
            <person name="Hoefte H."/>
        </authorList>
    </citation>
    <scope>NUCLEOTIDE SEQUENCE [LARGE SCALE MRNA] OF 78-192</scope>
    <source>
        <strain>cv. Columbia</strain>
        <tissue>Seedling</tissue>
    </source>
</reference>